<name>AROK_NITEU</name>
<accession>Q82TC0</accession>
<reference key="1">
    <citation type="journal article" date="2003" name="J. Bacteriol.">
        <title>Complete genome sequence of the ammonia-oxidizing bacterium and obligate chemolithoautotroph Nitrosomonas europaea.</title>
        <authorList>
            <person name="Chain P."/>
            <person name="Lamerdin J.E."/>
            <person name="Larimer F.W."/>
            <person name="Regala W."/>
            <person name="Lao V."/>
            <person name="Land M.L."/>
            <person name="Hauser L."/>
            <person name="Hooper A.B."/>
            <person name="Klotz M.G."/>
            <person name="Norton J."/>
            <person name="Sayavedra-Soto L.A."/>
            <person name="Arciero D.M."/>
            <person name="Hommes N.G."/>
            <person name="Whittaker M.M."/>
            <person name="Arp D.J."/>
        </authorList>
    </citation>
    <scope>NUCLEOTIDE SEQUENCE [LARGE SCALE GENOMIC DNA]</scope>
    <source>
        <strain>ATCC 19718 / CIP 103999 / KCTC 2705 / NBRC 14298</strain>
    </source>
</reference>
<protein>
    <recommendedName>
        <fullName evidence="1">Shikimate kinase</fullName>
        <shortName evidence="1">SK</shortName>
        <ecNumber evidence="1">2.7.1.71</ecNumber>
    </recommendedName>
</protein>
<feature type="chain" id="PRO_0000237900" description="Shikimate kinase">
    <location>
        <begin position="1"/>
        <end position="211"/>
    </location>
</feature>
<feature type="region of interest" description="Disordered" evidence="2">
    <location>
        <begin position="1"/>
        <end position="22"/>
    </location>
</feature>
<feature type="compositionally biased region" description="Polar residues" evidence="2">
    <location>
        <begin position="12"/>
        <end position="22"/>
    </location>
</feature>
<feature type="binding site" evidence="1">
    <location>
        <begin position="36"/>
        <end position="41"/>
    </location>
    <ligand>
        <name>ATP</name>
        <dbReference type="ChEBI" id="CHEBI:30616"/>
    </ligand>
</feature>
<feature type="binding site" evidence="1">
    <location>
        <position position="40"/>
    </location>
    <ligand>
        <name>Mg(2+)</name>
        <dbReference type="ChEBI" id="CHEBI:18420"/>
    </ligand>
</feature>
<feature type="binding site" evidence="1">
    <location>
        <position position="58"/>
    </location>
    <ligand>
        <name>substrate</name>
    </ligand>
</feature>
<feature type="binding site" evidence="1">
    <location>
        <position position="82"/>
    </location>
    <ligand>
        <name>substrate</name>
    </ligand>
</feature>
<feature type="binding site" evidence="1">
    <location>
        <position position="104"/>
    </location>
    <ligand>
        <name>substrate</name>
    </ligand>
</feature>
<feature type="binding site" evidence="1">
    <location>
        <position position="142"/>
    </location>
    <ligand>
        <name>ATP</name>
        <dbReference type="ChEBI" id="CHEBI:30616"/>
    </ligand>
</feature>
<feature type="binding site" evidence="1">
    <location>
        <position position="161"/>
    </location>
    <ligand>
        <name>substrate</name>
    </ligand>
</feature>
<feature type="binding site" evidence="1">
    <location>
        <position position="178"/>
    </location>
    <ligand>
        <name>ATP</name>
        <dbReference type="ChEBI" id="CHEBI:30616"/>
    </ligand>
</feature>
<keyword id="KW-0028">Amino-acid biosynthesis</keyword>
<keyword id="KW-0057">Aromatic amino acid biosynthesis</keyword>
<keyword id="KW-0067">ATP-binding</keyword>
<keyword id="KW-0963">Cytoplasm</keyword>
<keyword id="KW-0418">Kinase</keyword>
<keyword id="KW-0460">Magnesium</keyword>
<keyword id="KW-0479">Metal-binding</keyword>
<keyword id="KW-0547">Nucleotide-binding</keyword>
<keyword id="KW-1185">Reference proteome</keyword>
<keyword id="KW-0808">Transferase</keyword>
<organism>
    <name type="scientific">Nitrosomonas europaea (strain ATCC 19718 / CIP 103999 / KCTC 2705 / NBRC 14298)</name>
    <dbReference type="NCBI Taxonomy" id="228410"/>
    <lineage>
        <taxon>Bacteria</taxon>
        <taxon>Pseudomonadati</taxon>
        <taxon>Pseudomonadota</taxon>
        <taxon>Betaproteobacteria</taxon>
        <taxon>Nitrosomonadales</taxon>
        <taxon>Nitrosomonadaceae</taxon>
        <taxon>Nitrosomonas</taxon>
    </lineage>
</organism>
<proteinExistence type="inferred from homology"/>
<sequence length="211" mass="23703">MHFRYNYRMQRSKTPNTKNSDTGSIPGNIILIGMMGSGKTTVGKLLANLVGKTFIDIDHEIQRRTGVGIPVIFEIEGEAGFRKRESEVLRDIVRQQNIVLATGGGAILHPDNRALLRQHGTVVYLCAPVTELRRRTYLDKNRPLLQTGNVHAKLIELFTQRDPLYRETAHIIMDSGRQSARAFVQKLIQKLRQSNQEFTAAGSPPCVKPSE</sequence>
<gene>
    <name evidence="1" type="primary">aroK</name>
    <name type="ordered locus">NE1980</name>
</gene>
<evidence type="ECO:0000255" key="1">
    <source>
        <dbReference type="HAMAP-Rule" id="MF_00109"/>
    </source>
</evidence>
<evidence type="ECO:0000256" key="2">
    <source>
        <dbReference type="SAM" id="MobiDB-lite"/>
    </source>
</evidence>
<dbReference type="EC" id="2.7.1.71" evidence="1"/>
<dbReference type="EMBL" id="AL954747">
    <property type="protein sequence ID" value="CAD85891.1"/>
    <property type="molecule type" value="Genomic_DNA"/>
</dbReference>
<dbReference type="SMR" id="Q82TC0"/>
<dbReference type="STRING" id="228410.NE1980"/>
<dbReference type="KEGG" id="neu:NE1980"/>
<dbReference type="eggNOG" id="COG0703">
    <property type="taxonomic scope" value="Bacteria"/>
</dbReference>
<dbReference type="HOGENOM" id="CLU_057607_2_2_4"/>
<dbReference type="OrthoDB" id="9800332at2"/>
<dbReference type="PhylomeDB" id="Q82TC0"/>
<dbReference type="UniPathway" id="UPA00053">
    <property type="reaction ID" value="UER00088"/>
</dbReference>
<dbReference type="Proteomes" id="UP000001416">
    <property type="component" value="Chromosome"/>
</dbReference>
<dbReference type="GO" id="GO:0005829">
    <property type="term" value="C:cytosol"/>
    <property type="evidence" value="ECO:0007669"/>
    <property type="project" value="TreeGrafter"/>
</dbReference>
<dbReference type="GO" id="GO:0005524">
    <property type="term" value="F:ATP binding"/>
    <property type="evidence" value="ECO:0007669"/>
    <property type="project" value="UniProtKB-UniRule"/>
</dbReference>
<dbReference type="GO" id="GO:0000287">
    <property type="term" value="F:magnesium ion binding"/>
    <property type="evidence" value="ECO:0007669"/>
    <property type="project" value="UniProtKB-UniRule"/>
</dbReference>
<dbReference type="GO" id="GO:0004765">
    <property type="term" value="F:shikimate kinase activity"/>
    <property type="evidence" value="ECO:0007669"/>
    <property type="project" value="UniProtKB-UniRule"/>
</dbReference>
<dbReference type="GO" id="GO:0008652">
    <property type="term" value="P:amino acid biosynthetic process"/>
    <property type="evidence" value="ECO:0007669"/>
    <property type="project" value="UniProtKB-KW"/>
</dbReference>
<dbReference type="GO" id="GO:0009073">
    <property type="term" value="P:aromatic amino acid family biosynthetic process"/>
    <property type="evidence" value="ECO:0007669"/>
    <property type="project" value="UniProtKB-KW"/>
</dbReference>
<dbReference type="GO" id="GO:0009423">
    <property type="term" value="P:chorismate biosynthetic process"/>
    <property type="evidence" value="ECO:0007669"/>
    <property type="project" value="UniProtKB-UniRule"/>
</dbReference>
<dbReference type="CDD" id="cd00464">
    <property type="entry name" value="SK"/>
    <property type="match status" value="1"/>
</dbReference>
<dbReference type="Gene3D" id="3.40.50.300">
    <property type="entry name" value="P-loop containing nucleotide triphosphate hydrolases"/>
    <property type="match status" value="1"/>
</dbReference>
<dbReference type="HAMAP" id="MF_00109">
    <property type="entry name" value="Shikimate_kinase"/>
    <property type="match status" value="1"/>
</dbReference>
<dbReference type="InterPro" id="IPR027417">
    <property type="entry name" value="P-loop_NTPase"/>
</dbReference>
<dbReference type="InterPro" id="IPR031322">
    <property type="entry name" value="Shikimate/glucono_kinase"/>
</dbReference>
<dbReference type="InterPro" id="IPR000623">
    <property type="entry name" value="Shikimate_kinase/TSH1"/>
</dbReference>
<dbReference type="InterPro" id="IPR023000">
    <property type="entry name" value="Shikimate_kinase_CS"/>
</dbReference>
<dbReference type="PANTHER" id="PTHR21087">
    <property type="entry name" value="SHIKIMATE KINASE"/>
    <property type="match status" value="1"/>
</dbReference>
<dbReference type="PANTHER" id="PTHR21087:SF16">
    <property type="entry name" value="SHIKIMATE KINASE 1, CHLOROPLASTIC"/>
    <property type="match status" value="1"/>
</dbReference>
<dbReference type="Pfam" id="PF01202">
    <property type="entry name" value="SKI"/>
    <property type="match status" value="1"/>
</dbReference>
<dbReference type="PRINTS" id="PR01100">
    <property type="entry name" value="SHIKIMTKNASE"/>
</dbReference>
<dbReference type="SUPFAM" id="SSF52540">
    <property type="entry name" value="P-loop containing nucleoside triphosphate hydrolases"/>
    <property type="match status" value="1"/>
</dbReference>
<dbReference type="PROSITE" id="PS01128">
    <property type="entry name" value="SHIKIMATE_KINASE"/>
    <property type="match status" value="1"/>
</dbReference>
<comment type="function">
    <text evidence="1">Catalyzes the specific phosphorylation of the 3-hydroxyl group of shikimic acid using ATP as a cosubstrate.</text>
</comment>
<comment type="catalytic activity">
    <reaction evidence="1">
        <text>shikimate + ATP = 3-phosphoshikimate + ADP + H(+)</text>
        <dbReference type="Rhea" id="RHEA:13121"/>
        <dbReference type="ChEBI" id="CHEBI:15378"/>
        <dbReference type="ChEBI" id="CHEBI:30616"/>
        <dbReference type="ChEBI" id="CHEBI:36208"/>
        <dbReference type="ChEBI" id="CHEBI:145989"/>
        <dbReference type="ChEBI" id="CHEBI:456216"/>
        <dbReference type="EC" id="2.7.1.71"/>
    </reaction>
</comment>
<comment type="cofactor">
    <cofactor evidence="1">
        <name>Mg(2+)</name>
        <dbReference type="ChEBI" id="CHEBI:18420"/>
    </cofactor>
    <text evidence="1">Binds 1 Mg(2+) ion per subunit.</text>
</comment>
<comment type="pathway">
    <text evidence="1">Metabolic intermediate biosynthesis; chorismate biosynthesis; chorismate from D-erythrose 4-phosphate and phosphoenolpyruvate: step 5/7.</text>
</comment>
<comment type="subunit">
    <text evidence="1">Monomer.</text>
</comment>
<comment type="subcellular location">
    <subcellularLocation>
        <location evidence="1">Cytoplasm</location>
    </subcellularLocation>
</comment>
<comment type="similarity">
    <text evidence="1">Belongs to the shikimate kinase family.</text>
</comment>